<dbReference type="EMBL" id="CP001615">
    <property type="protein sequence ID" value="ACQ70553.1"/>
    <property type="molecule type" value="Genomic_DNA"/>
</dbReference>
<dbReference type="RefSeq" id="WP_012727671.1">
    <property type="nucleotide sequence ID" value="NC_012673.1"/>
</dbReference>
<dbReference type="SMR" id="C4KZP0"/>
<dbReference type="STRING" id="360911.EAT1b_1627"/>
<dbReference type="GeneID" id="94370749"/>
<dbReference type="KEGG" id="eat:EAT1b_1627"/>
<dbReference type="eggNOG" id="COG0092">
    <property type="taxonomic scope" value="Bacteria"/>
</dbReference>
<dbReference type="HOGENOM" id="CLU_058591_0_2_9"/>
<dbReference type="OrthoDB" id="9806396at2"/>
<dbReference type="Proteomes" id="UP000000716">
    <property type="component" value="Chromosome"/>
</dbReference>
<dbReference type="GO" id="GO:0022627">
    <property type="term" value="C:cytosolic small ribosomal subunit"/>
    <property type="evidence" value="ECO:0007669"/>
    <property type="project" value="TreeGrafter"/>
</dbReference>
<dbReference type="GO" id="GO:0003729">
    <property type="term" value="F:mRNA binding"/>
    <property type="evidence" value="ECO:0007669"/>
    <property type="project" value="UniProtKB-UniRule"/>
</dbReference>
<dbReference type="GO" id="GO:0019843">
    <property type="term" value="F:rRNA binding"/>
    <property type="evidence" value="ECO:0007669"/>
    <property type="project" value="UniProtKB-UniRule"/>
</dbReference>
<dbReference type="GO" id="GO:0003735">
    <property type="term" value="F:structural constituent of ribosome"/>
    <property type="evidence" value="ECO:0007669"/>
    <property type="project" value="InterPro"/>
</dbReference>
<dbReference type="GO" id="GO:0006412">
    <property type="term" value="P:translation"/>
    <property type="evidence" value="ECO:0007669"/>
    <property type="project" value="UniProtKB-UniRule"/>
</dbReference>
<dbReference type="CDD" id="cd02412">
    <property type="entry name" value="KH-II_30S_S3"/>
    <property type="match status" value="1"/>
</dbReference>
<dbReference type="FunFam" id="3.30.300.20:FF:000001">
    <property type="entry name" value="30S ribosomal protein S3"/>
    <property type="match status" value="1"/>
</dbReference>
<dbReference type="Gene3D" id="3.30.300.20">
    <property type="match status" value="1"/>
</dbReference>
<dbReference type="Gene3D" id="3.30.1140.32">
    <property type="entry name" value="Ribosomal protein S3, C-terminal domain"/>
    <property type="match status" value="1"/>
</dbReference>
<dbReference type="HAMAP" id="MF_01309_B">
    <property type="entry name" value="Ribosomal_uS3_B"/>
    <property type="match status" value="1"/>
</dbReference>
<dbReference type="InterPro" id="IPR004087">
    <property type="entry name" value="KH_dom"/>
</dbReference>
<dbReference type="InterPro" id="IPR015946">
    <property type="entry name" value="KH_dom-like_a/b"/>
</dbReference>
<dbReference type="InterPro" id="IPR004044">
    <property type="entry name" value="KH_dom_type_2"/>
</dbReference>
<dbReference type="InterPro" id="IPR009019">
    <property type="entry name" value="KH_sf_prok-type"/>
</dbReference>
<dbReference type="InterPro" id="IPR036419">
    <property type="entry name" value="Ribosomal_S3_C_sf"/>
</dbReference>
<dbReference type="InterPro" id="IPR005704">
    <property type="entry name" value="Ribosomal_uS3_bac-typ"/>
</dbReference>
<dbReference type="InterPro" id="IPR001351">
    <property type="entry name" value="Ribosomal_uS3_C"/>
</dbReference>
<dbReference type="InterPro" id="IPR018280">
    <property type="entry name" value="Ribosomal_uS3_CS"/>
</dbReference>
<dbReference type="NCBIfam" id="TIGR01009">
    <property type="entry name" value="rpsC_bact"/>
    <property type="match status" value="1"/>
</dbReference>
<dbReference type="PANTHER" id="PTHR11760">
    <property type="entry name" value="30S/40S RIBOSOMAL PROTEIN S3"/>
    <property type="match status" value="1"/>
</dbReference>
<dbReference type="PANTHER" id="PTHR11760:SF19">
    <property type="entry name" value="SMALL RIBOSOMAL SUBUNIT PROTEIN US3C"/>
    <property type="match status" value="1"/>
</dbReference>
<dbReference type="Pfam" id="PF07650">
    <property type="entry name" value="KH_2"/>
    <property type="match status" value="1"/>
</dbReference>
<dbReference type="Pfam" id="PF00189">
    <property type="entry name" value="Ribosomal_S3_C"/>
    <property type="match status" value="1"/>
</dbReference>
<dbReference type="SMART" id="SM00322">
    <property type="entry name" value="KH"/>
    <property type="match status" value="1"/>
</dbReference>
<dbReference type="SUPFAM" id="SSF54814">
    <property type="entry name" value="Prokaryotic type KH domain (KH-domain type II)"/>
    <property type="match status" value="1"/>
</dbReference>
<dbReference type="SUPFAM" id="SSF54821">
    <property type="entry name" value="Ribosomal protein S3 C-terminal domain"/>
    <property type="match status" value="1"/>
</dbReference>
<dbReference type="PROSITE" id="PS50823">
    <property type="entry name" value="KH_TYPE_2"/>
    <property type="match status" value="1"/>
</dbReference>
<dbReference type="PROSITE" id="PS00548">
    <property type="entry name" value="RIBOSOMAL_S3"/>
    <property type="match status" value="1"/>
</dbReference>
<comment type="function">
    <text evidence="1">Binds the lower part of the 30S subunit head. Binds mRNA in the 70S ribosome, positioning it for translation.</text>
</comment>
<comment type="subunit">
    <text evidence="1">Part of the 30S ribosomal subunit. Forms a tight complex with proteins S10 and S14.</text>
</comment>
<comment type="similarity">
    <text evidence="1">Belongs to the universal ribosomal protein uS3 family.</text>
</comment>
<feature type="chain" id="PRO_1000214339" description="Small ribosomal subunit protein uS3">
    <location>
        <begin position="1"/>
        <end position="219"/>
    </location>
</feature>
<feature type="domain" description="KH type-2" evidence="1">
    <location>
        <begin position="38"/>
        <end position="107"/>
    </location>
</feature>
<organism>
    <name type="scientific">Exiguobacterium sp. (strain ATCC BAA-1283 / AT1b)</name>
    <dbReference type="NCBI Taxonomy" id="360911"/>
    <lineage>
        <taxon>Bacteria</taxon>
        <taxon>Bacillati</taxon>
        <taxon>Bacillota</taxon>
        <taxon>Bacilli</taxon>
        <taxon>Bacillales</taxon>
        <taxon>Bacillales Family XII. Incertae Sedis</taxon>
        <taxon>Exiguobacterium</taxon>
    </lineage>
</organism>
<accession>C4KZP0</accession>
<reference key="1">
    <citation type="journal article" date="2011" name="J. Bacteriol.">
        <title>Complete genome sequence of the Thermophilic Bacterium Exiguobacterium sp. AT1b.</title>
        <authorList>
            <person name="Vishnivetskaya T.A."/>
            <person name="Lucas S."/>
            <person name="Copeland A."/>
            <person name="Lapidus A."/>
            <person name="Glavina del Rio T."/>
            <person name="Dalin E."/>
            <person name="Tice H."/>
            <person name="Bruce D.C."/>
            <person name="Goodwin L.A."/>
            <person name="Pitluck S."/>
            <person name="Saunders E."/>
            <person name="Brettin T."/>
            <person name="Detter C."/>
            <person name="Han C."/>
            <person name="Larimer F."/>
            <person name="Land M.L."/>
            <person name="Hauser L.J."/>
            <person name="Kyrpides N.C."/>
            <person name="Ovchinnikova G."/>
            <person name="Kathariou S."/>
            <person name="Ramaley R.F."/>
            <person name="Rodrigues D.F."/>
            <person name="Hendrix C."/>
            <person name="Richardson P."/>
            <person name="Tiedje J.M."/>
        </authorList>
    </citation>
    <scope>NUCLEOTIDE SEQUENCE [LARGE SCALE GENOMIC DNA]</scope>
    <source>
        <strain>ATCC BAA-1283 / AT1b</strain>
    </source>
</reference>
<name>RS3_EXISA</name>
<protein>
    <recommendedName>
        <fullName evidence="1">Small ribosomal subunit protein uS3</fullName>
    </recommendedName>
    <alternativeName>
        <fullName evidence="2">30S ribosomal protein S3</fullName>
    </alternativeName>
</protein>
<gene>
    <name evidence="1" type="primary">rpsC</name>
    <name type="ordered locus">EAT1b_1627</name>
</gene>
<evidence type="ECO:0000255" key="1">
    <source>
        <dbReference type="HAMAP-Rule" id="MF_01309"/>
    </source>
</evidence>
<evidence type="ECO:0000305" key="2"/>
<proteinExistence type="inferred from homology"/>
<keyword id="KW-0687">Ribonucleoprotein</keyword>
<keyword id="KW-0689">Ribosomal protein</keyword>
<keyword id="KW-0694">RNA-binding</keyword>
<keyword id="KW-0699">rRNA-binding</keyword>
<sequence>MGQKVNPHGLRVGVIKDWDSRWYAEKDYADLLHEDFVIREYIENKMKDASVSKVEIERAANRVNISLHTAKPGMVIGKGGSEIESLRKHITKIADGKRVHINVVEVKNADAVAKLVAENIARQLEGRVSFRRAMKQSIQRSMRTGIKGIKTEVSGRLGGADIARSEKYSEGTVPLHTLRADIDYGTAEADTTYGKIGVKVWLYHGEVLPTKNNTAKNAE</sequence>